<comment type="function">
    <text evidence="1">Specifically methylates the uridine in position 2552 of 23S rRNA at the 2'-O position of the ribose in the fully assembled 50S ribosomal subunit.</text>
</comment>
<comment type="catalytic activity">
    <reaction evidence="1">
        <text>uridine(2552) in 23S rRNA + S-adenosyl-L-methionine = 2'-O-methyluridine(2552) in 23S rRNA + S-adenosyl-L-homocysteine + H(+)</text>
        <dbReference type="Rhea" id="RHEA:42720"/>
        <dbReference type="Rhea" id="RHEA-COMP:10202"/>
        <dbReference type="Rhea" id="RHEA-COMP:10203"/>
        <dbReference type="ChEBI" id="CHEBI:15378"/>
        <dbReference type="ChEBI" id="CHEBI:57856"/>
        <dbReference type="ChEBI" id="CHEBI:59789"/>
        <dbReference type="ChEBI" id="CHEBI:65315"/>
        <dbReference type="ChEBI" id="CHEBI:74478"/>
        <dbReference type="EC" id="2.1.1.166"/>
    </reaction>
</comment>
<comment type="subcellular location">
    <subcellularLocation>
        <location evidence="1">Cytoplasm</location>
    </subcellularLocation>
</comment>
<comment type="similarity">
    <text evidence="1">Belongs to the class I-like SAM-binding methyltransferase superfamily. RNA methyltransferase RlmE family.</text>
</comment>
<reference key="1">
    <citation type="journal article" date="2009" name="Genome Biol.">
        <title>Genomic and genetic analyses of diversity and plant interactions of Pseudomonas fluorescens.</title>
        <authorList>
            <person name="Silby M.W."/>
            <person name="Cerdeno-Tarraga A.M."/>
            <person name="Vernikos G.S."/>
            <person name="Giddens S.R."/>
            <person name="Jackson R.W."/>
            <person name="Preston G.M."/>
            <person name="Zhang X.-X."/>
            <person name="Moon C.D."/>
            <person name="Gehrig S.M."/>
            <person name="Godfrey S.A.C."/>
            <person name="Knight C.G."/>
            <person name="Malone J.G."/>
            <person name="Robinson Z."/>
            <person name="Spiers A.J."/>
            <person name="Harris S."/>
            <person name="Challis G.L."/>
            <person name="Yaxley A.M."/>
            <person name="Harris D."/>
            <person name="Seeger K."/>
            <person name="Murphy L."/>
            <person name="Rutter S."/>
            <person name="Squares R."/>
            <person name="Quail M.A."/>
            <person name="Saunders E."/>
            <person name="Mavromatis K."/>
            <person name="Brettin T.S."/>
            <person name="Bentley S.D."/>
            <person name="Hothersall J."/>
            <person name="Stephens E."/>
            <person name="Thomas C.M."/>
            <person name="Parkhill J."/>
            <person name="Levy S.B."/>
            <person name="Rainey P.B."/>
            <person name="Thomson N.R."/>
        </authorList>
    </citation>
    <scope>NUCLEOTIDE SEQUENCE [LARGE SCALE GENOMIC DNA]</scope>
    <source>
        <strain>SBW25</strain>
    </source>
</reference>
<proteinExistence type="inferred from homology"/>
<evidence type="ECO:0000255" key="1">
    <source>
        <dbReference type="HAMAP-Rule" id="MF_01547"/>
    </source>
</evidence>
<keyword id="KW-0963">Cytoplasm</keyword>
<keyword id="KW-0489">Methyltransferase</keyword>
<keyword id="KW-0698">rRNA processing</keyword>
<keyword id="KW-0949">S-adenosyl-L-methionine</keyword>
<keyword id="KW-0808">Transferase</keyword>
<organism>
    <name type="scientific">Pseudomonas fluorescens (strain SBW25)</name>
    <dbReference type="NCBI Taxonomy" id="216595"/>
    <lineage>
        <taxon>Bacteria</taxon>
        <taxon>Pseudomonadati</taxon>
        <taxon>Pseudomonadota</taxon>
        <taxon>Gammaproteobacteria</taxon>
        <taxon>Pseudomonadales</taxon>
        <taxon>Pseudomonadaceae</taxon>
        <taxon>Pseudomonas</taxon>
    </lineage>
</organism>
<sequence length="216" mass="24141">MARSKTSLKWLQEHFNDPYVKKAQKDGYRSRASYKLLEIQDKDKLIRPGMSVIDLGAAPGGWSQVTSRLIGGQGRLIASDILEMDSIPDVTFVHGDFTQDTVLAQILEAVGNSQVDLVISDMAPNMSGLPAVDMPRAMFLCELALDLAGRVLRPGGDFLVKVFQGEGFDEYHKNIRKLFDKVQTRKPDSSRDRSREQYLLCRGFRGVEGAASEERF</sequence>
<dbReference type="EC" id="2.1.1.166" evidence="1"/>
<dbReference type="EMBL" id="AM181176">
    <property type="protein sequence ID" value="CAY52363.1"/>
    <property type="molecule type" value="Genomic_DNA"/>
</dbReference>
<dbReference type="RefSeq" id="WP_015885924.1">
    <property type="nucleotide sequence ID" value="NC_012660.1"/>
</dbReference>
<dbReference type="SMR" id="C3K267"/>
<dbReference type="STRING" id="294.SRM1_00817"/>
<dbReference type="GeneID" id="93466892"/>
<dbReference type="eggNOG" id="COG0293">
    <property type="taxonomic scope" value="Bacteria"/>
</dbReference>
<dbReference type="HOGENOM" id="CLU_009422_4_0_6"/>
<dbReference type="OrthoDB" id="9790080at2"/>
<dbReference type="GO" id="GO:0005737">
    <property type="term" value="C:cytoplasm"/>
    <property type="evidence" value="ECO:0007669"/>
    <property type="project" value="UniProtKB-SubCell"/>
</dbReference>
<dbReference type="GO" id="GO:0008650">
    <property type="term" value="F:rRNA (uridine-2'-O-)-methyltransferase activity"/>
    <property type="evidence" value="ECO:0007669"/>
    <property type="project" value="UniProtKB-UniRule"/>
</dbReference>
<dbReference type="FunFam" id="3.40.50.150:FF:000005">
    <property type="entry name" value="Ribosomal RNA large subunit methyltransferase E"/>
    <property type="match status" value="1"/>
</dbReference>
<dbReference type="Gene3D" id="3.40.50.150">
    <property type="entry name" value="Vaccinia Virus protein VP39"/>
    <property type="match status" value="1"/>
</dbReference>
<dbReference type="HAMAP" id="MF_01547">
    <property type="entry name" value="RNA_methyltr_E"/>
    <property type="match status" value="1"/>
</dbReference>
<dbReference type="InterPro" id="IPR050082">
    <property type="entry name" value="RNA_methyltr_RlmE"/>
</dbReference>
<dbReference type="InterPro" id="IPR002877">
    <property type="entry name" value="RNA_MeTrfase_FtsJ_dom"/>
</dbReference>
<dbReference type="InterPro" id="IPR015507">
    <property type="entry name" value="rRNA-MeTfrase_E"/>
</dbReference>
<dbReference type="InterPro" id="IPR029063">
    <property type="entry name" value="SAM-dependent_MTases_sf"/>
</dbReference>
<dbReference type="NCBIfam" id="NF008390">
    <property type="entry name" value="PRK11188.1"/>
    <property type="match status" value="1"/>
</dbReference>
<dbReference type="PANTHER" id="PTHR10920">
    <property type="entry name" value="RIBOSOMAL RNA METHYLTRANSFERASE"/>
    <property type="match status" value="1"/>
</dbReference>
<dbReference type="PANTHER" id="PTHR10920:SF18">
    <property type="entry name" value="RRNA METHYLTRANSFERASE 2, MITOCHONDRIAL"/>
    <property type="match status" value="1"/>
</dbReference>
<dbReference type="Pfam" id="PF01728">
    <property type="entry name" value="FtsJ"/>
    <property type="match status" value="1"/>
</dbReference>
<dbReference type="PIRSF" id="PIRSF005461">
    <property type="entry name" value="23S_rRNA_mtase"/>
    <property type="match status" value="1"/>
</dbReference>
<dbReference type="SUPFAM" id="SSF53335">
    <property type="entry name" value="S-adenosyl-L-methionine-dependent methyltransferases"/>
    <property type="match status" value="1"/>
</dbReference>
<feature type="chain" id="PRO_1000215456" description="Ribosomal RNA large subunit methyltransferase E">
    <location>
        <begin position="1"/>
        <end position="216"/>
    </location>
</feature>
<feature type="active site" description="Proton acceptor" evidence="1">
    <location>
        <position position="161"/>
    </location>
</feature>
<feature type="binding site" evidence="1">
    <location>
        <position position="60"/>
    </location>
    <ligand>
        <name>S-adenosyl-L-methionine</name>
        <dbReference type="ChEBI" id="CHEBI:59789"/>
    </ligand>
</feature>
<feature type="binding site" evidence="1">
    <location>
        <position position="62"/>
    </location>
    <ligand>
        <name>S-adenosyl-L-methionine</name>
        <dbReference type="ChEBI" id="CHEBI:59789"/>
    </ligand>
</feature>
<feature type="binding site" evidence="1">
    <location>
        <position position="80"/>
    </location>
    <ligand>
        <name>S-adenosyl-L-methionine</name>
        <dbReference type="ChEBI" id="CHEBI:59789"/>
    </ligand>
</feature>
<feature type="binding site" evidence="1">
    <location>
        <position position="96"/>
    </location>
    <ligand>
        <name>S-adenosyl-L-methionine</name>
        <dbReference type="ChEBI" id="CHEBI:59789"/>
    </ligand>
</feature>
<feature type="binding site" evidence="1">
    <location>
        <position position="121"/>
    </location>
    <ligand>
        <name>S-adenosyl-L-methionine</name>
        <dbReference type="ChEBI" id="CHEBI:59789"/>
    </ligand>
</feature>
<protein>
    <recommendedName>
        <fullName evidence="1">Ribosomal RNA large subunit methyltransferase E</fullName>
        <ecNumber evidence="1">2.1.1.166</ecNumber>
    </recommendedName>
    <alternativeName>
        <fullName evidence="1">23S rRNA Um2552 methyltransferase</fullName>
    </alternativeName>
    <alternativeName>
        <fullName evidence="1">rRNA (uridine-2'-O-)-methyltransferase</fullName>
    </alternativeName>
</protein>
<name>RLME_PSEFS</name>
<gene>
    <name evidence="1" type="primary">rlmE</name>
    <name evidence="1" type="synonym">ftsJ</name>
    <name evidence="1" type="synonym">rrmJ</name>
    <name type="ordered locus">PFLU_5261</name>
</gene>
<accession>C3K267</accession>